<dbReference type="EC" id="2.8.1.4" evidence="1"/>
<dbReference type="EMBL" id="CP000246">
    <property type="protein sequence ID" value="ABG84903.1"/>
    <property type="molecule type" value="Genomic_DNA"/>
</dbReference>
<dbReference type="RefSeq" id="WP_004459380.1">
    <property type="nucleotide sequence ID" value="NC_008261.1"/>
</dbReference>
<dbReference type="SMR" id="Q0TQI5"/>
<dbReference type="STRING" id="195103.CPF_1666"/>
<dbReference type="PaxDb" id="195103-CPF_1666"/>
<dbReference type="KEGG" id="cpf:CPF_1666"/>
<dbReference type="eggNOG" id="COG0301">
    <property type="taxonomic scope" value="Bacteria"/>
</dbReference>
<dbReference type="HOGENOM" id="CLU_037952_4_0_9"/>
<dbReference type="UniPathway" id="UPA00060"/>
<dbReference type="Proteomes" id="UP000001823">
    <property type="component" value="Chromosome"/>
</dbReference>
<dbReference type="GO" id="GO:0005829">
    <property type="term" value="C:cytosol"/>
    <property type="evidence" value="ECO:0007669"/>
    <property type="project" value="TreeGrafter"/>
</dbReference>
<dbReference type="GO" id="GO:0005524">
    <property type="term" value="F:ATP binding"/>
    <property type="evidence" value="ECO:0007669"/>
    <property type="project" value="UniProtKB-UniRule"/>
</dbReference>
<dbReference type="GO" id="GO:0004810">
    <property type="term" value="F:CCA tRNA nucleotidyltransferase activity"/>
    <property type="evidence" value="ECO:0007669"/>
    <property type="project" value="InterPro"/>
</dbReference>
<dbReference type="GO" id="GO:0000049">
    <property type="term" value="F:tRNA binding"/>
    <property type="evidence" value="ECO:0007669"/>
    <property type="project" value="UniProtKB-UniRule"/>
</dbReference>
<dbReference type="GO" id="GO:0140741">
    <property type="term" value="F:tRNA-uracil-4 sulfurtransferase activity"/>
    <property type="evidence" value="ECO:0007669"/>
    <property type="project" value="UniProtKB-EC"/>
</dbReference>
<dbReference type="GO" id="GO:0009228">
    <property type="term" value="P:thiamine biosynthetic process"/>
    <property type="evidence" value="ECO:0007669"/>
    <property type="project" value="UniProtKB-KW"/>
</dbReference>
<dbReference type="GO" id="GO:0009229">
    <property type="term" value="P:thiamine diphosphate biosynthetic process"/>
    <property type="evidence" value="ECO:0007669"/>
    <property type="project" value="UniProtKB-UniRule"/>
</dbReference>
<dbReference type="GO" id="GO:0052837">
    <property type="term" value="P:thiazole biosynthetic process"/>
    <property type="evidence" value="ECO:0007669"/>
    <property type="project" value="TreeGrafter"/>
</dbReference>
<dbReference type="GO" id="GO:0002937">
    <property type="term" value="P:tRNA 4-thiouridine biosynthesis"/>
    <property type="evidence" value="ECO:0007669"/>
    <property type="project" value="TreeGrafter"/>
</dbReference>
<dbReference type="CDD" id="cd01712">
    <property type="entry name" value="PPase_ThiI"/>
    <property type="match status" value="1"/>
</dbReference>
<dbReference type="CDD" id="cd11716">
    <property type="entry name" value="THUMP_ThiI"/>
    <property type="match status" value="1"/>
</dbReference>
<dbReference type="FunFam" id="3.40.50.620:FF:000053">
    <property type="entry name" value="Probable tRNA sulfurtransferase"/>
    <property type="match status" value="1"/>
</dbReference>
<dbReference type="Gene3D" id="3.30.2130.30">
    <property type="match status" value="1"/>
</dbReference>
<dbReference type="Gene3D" id="3.40.50.620">
    <property type="entry name" value="HUPs"/>
    <property type="match status" value="1"/>
</dbReference>
<dbReference type="HAMAP" id="MF_00021">
    <property type="entry name" value="ThiI"/>
    <property type="match status" value="1"/>
</dbReference>
<dbReference type="InterPro" id="IPR014729">
    <property type="entry name" value="Rossmann-like_a/b/a_fold"/>
</dbReference>
<dbReference type="InterPro" id="IPR020536">
    <property type="entry name" value="ThiI_AANH"/>
</dbReference>
<dbReference type="InterPro" id="IPR054173">
    <property type="entry name" value="ThiI_fer"/>
</dbReference>
<dbReference type="InterPro" id="IPR049961">
    <property type="entry name" value="ThiI_N"/>
</dbReference>
<dbReference type="InterPro" id="IPR004114">
    <property type="entry name" value="THUMP_dom"/>
</dbReference>
<dbReference type="InterPro" id="IPR049962">
    <property type="entry name" value="THUMP_ThiI"/>
</dbReference>
<dbReference type="InterPro" id="IPR003720">
    <property type="entry name" value="tRNA_STrfase"/>
</dbReference>
<dbReference type="InterPro" id="IPR050102">
    <property type="entry name" value="tRNA_sulfurtransferase_ThiI"/>
</dbReference>
<dbReference type="NCBIfam" id="TIGR00342">
    <property type="entry name" value="tRNA uracil 4-sulfurtransferase ThiI"/>
    <property type="match status" value="1"/>
</dbReference>
<dbReference type="PANTHER" id="PTHR43209">
    <property type="entry name" value="TRNA SULFURTRANSFERASE"/>
    <property type="match status" value="1"/>
</dbReference>
<dbReference type="PANTHER" id="PTHR43209:SF1">
    <property type="entry name" value="TRNA SULFURTRANSFERASE"/>
    <property type="match status" value="1"/>
</dbReference>
<dbReference type="Pfam" id="PF02568">
    <property type="entry name" value="ThiI"/>
    <property type="match status" value="1"/>
</dbReference>
<dbReference type="Pfam" id="PF22025">
    <property type="entry name" value="ThiI_fer"/>
    <property type="match status" value="1"/>
</dbReference>
<dbReference type="Pfam" id="PF02926">
    <property type="entry name" value="THUMP"/>
    <property type="match status" value="1"/>
</dbReference>
<dbReference type="SMART" id="SM00981">
    <property type="entry name" value="THUMP"/>
    <property type="match status" value="1"/>
</dbReference>
<dbReference type="SUPFAM" id="SSF52402">
    <property type="entry name" value="Adenine nucleotide alpha hydrolases-like"/>
    <property type="match status" value="1"/>
</dbReference>
<dbReference type="SUPFAM" id="SSF143437">
    <property type="entry name" value="THUMP domain-like"/>
    <property type="match status" value="1"/>
</dbReference>
<dbReference type="PROSITE" id="PS51165">
    <property type="entry name" value="THUMP"/>
    <property type="match status" value="1"/>
</dbReference>
<gene>
    <name evidence="1" type="primary">thiI</name>
    <name type="ordered locus">CPF_1666</name>
</gene>
<sequence length="385" mass="44233">MNNLILVKYASEIFLKGLNKNKFERKLKENIRKKLKDIDHEFITDQNRWFIKSEDLDGVIERVKKVFGVKELCLVTQVEGDFDSIKEEGLKKIKESKAKSFKVETNRANKKFPMNSMEVSRAVGGYILSELGDEIEVDIHNPECKLYVEIRGNAYVFTDKDKIKAVGGLPYGMNGSTMVMLSGGIDSPVAAYLMARRGVETHCVYYHSHPYTSERAKDKVKELAKIVGRYTEKITLYVVPFTEIQMDIIEKCREDELTIIMRRFMMRVACELSERKKIQSITTGESIGQVASQTMEGLMVSNDVSDRPVFRPLIAMDKEDIMDIARDIDTYETSILPYEDCCTIFVPKHPKTKPRVKDMIIAERKLDIEALVNKAIDEMETFIFE</sequence>
<evidence type="ECO:0000255" key="1">
    <source>
        <dbReference type="HAMAP-Rule" id="MF_00021"/>
    </source>
</evidence>
<name>THII_CLOP1</name>
<reference key="1">
    <citation type="journal article" date="2006" name="Genome Res.">
        <title>Skewed genomic variability in strains of the toxigenic bacterial pathogen, Clostridium perfringens.</title>
        <authorList>
            <person name="Myers G.S.A."/>
            <person name="Rasko D.A."/>
            <person name="Cheung J.K."/>
            <person name="Ravel J."/>
            <person name="Seshadri R."/>
            <person name="DeBoy R.T."/>
            <person name="Ren Q."/>
            <person name="Varga J."/>
            <person name="Awad M.M."/>
            <person name="Brinkac L.M."/>
            <person name="Daugherty S.C."/>
            <person name="Haft D.H."/>
            <person name="Dodson R.J."/>
            <person name="Madupu R."/>
            <person name="Nelson W.C."/>
            <person name="Rosovitz M.J."/>
            <person name="Sullivan S.A."/>
            <person name="Khouri H."/>
            <person name="Dimitrov G.I."/>
            <person name="Watkins K.L."/>
            <person name="Mulligan S."/>
            <person name="Benton J."/>
            <person name="Radune D."/>
            <person name="Fisher D.J."/>
            <person name="Atkins H.S."/>
            <person name="Hiscox T."/>
            <person name="Jost B.H."/>
            <person name="Billington S.J."/>
            <person name="Songer J.G."/>
            <person name="McClane B.A."/>
            <person name="Titball R.W."/>
            <person name="Rood J.I."/>
            <person name="Melville S.B."/>
            <person name="Paulsen I.T."/>
        </authorList>
    </citation>
    <scope>NUCLEOTIDE SEQUENCE [LARGE SCALE GENOMIC DNA]</scope>
    <source>
        <strain>ATCC 13124 / DSM 756 / JCM 1290 / NCIMB 6125 / NCTC 8237 / S 107 / Type A</strain>
    </source>
</reference>
<proteinExistence type="inferred from homology"/>
<accession>Q0TQI5</accession>
<feature type="chain" id="PRO_1000074214" description="Probable tRNA sulfurtransferase">
    <location>
        <begin position="1"/>
        <end position="385"/>
    </location>
</feature>
<feature type="domain" description="THUMP" evidence="1">
    <location>
        <begin position="57"/>
        <end position="160"/>
    </location>
</feature>
<feature type="binding site" evidence="1">
    <location>
        <begin position="180"/>
        <end position="181"/>
    </location>
    <ligand>
        <name>ATP</name>
        <dbReference type="ChEBI" id="CHEBI:30616"/>
    </ligand>
</feature>
<feature type="binding site" evidence="1">
    <location>
        <begin position="205"/>
        <end position="206"/>
    </location>
    <ligand>
        <name>ATP</name>
        <dbReference type="ChEBI" id="CHEBI:30616"/>
    </ligand>
</feature>
<feature type="binding site" evidence="1">
    <location>
        <position position="262"/>
    </location>
    <ligand>
        <name>ATP</name>
        <dbReference type="ChEBI" id="CHEBI:30616"/>
    </ligand>
</feature>
<feature type="binding site" evidence="1">
    <location>
        <position position="284"/>
    </location>
    <ligand>
        <name>ATP</name>
        <dbReference type="ChEBI" id="CHEBI:30616"/>
    </ligand>
</feature>
<feature type="binding site" evidence="1">
    <location>
        <position position="293"/>
    </location>
    <ligand>
        <name>ATP</name>
        <dbReference type="ChEBI" id="CHEBI:30616"/>
    </ligand>
</feature>
<keyword id="KW-0067">ATP-binding</keyword>
<keyword id="KW-0963">Cytoplasm</keyword>
<keyword id="KW-0547">Nucleotide-binding</keyword>
<keyword id="KW-0694">RNA-binding</keyword>
<keyword id="KW-0784">Thiamine biosynthesis</keyword>
<keyword id="KW-0808">Transferase</keyword>
<keyword id="KW-0820">tRNA-binding</keyword>
<comment type="function">
    <text evidence="1">Catalyzes the ATP-dependent transfer of a sulfur to tRNA to produce 4-thiouridine in position 8 of tRNAs, which functions as a near-UV photosensor. Also catalyzes the transfer of sulfur to the sulfur carrier protein ThiS, forming ThiS-thiocarboxylate. This is a step in the synthesis of thiazole, in the thiamine biosynthesis pathway. The sulfur is donated as persulfide by IscS.</text>
</comment>
<comment type="catalytic activity">
    <reaction evidence="1">
        <text>[ThiI sulfur-carrier protein]-S-sulfanyl-L-cysteine + a uridine in tRNA + 2 reduced [2Fe-2S]-[ferredoxin] + ATP + H(+) = [ThiI sulfur-carrier protein]-L-cysteine + a 4-thiouridine in tRNA + 2 oxidized [2Fe-2S]-[ferredoxin] + AMP + diphosphate</text>
        <dbReference type="Rhea" id="RHEA:24176"/>
        <dbReference type="Rhea" id="RHEA-COMP:10000"/>
        <dbReference type="Rhea" id="RHEA-COMP:10001"/>
        <dbReference type="Rhea" id="RHEA-COMP:13337"/>
        <dbReference type="Rhea" id="RHEA-COMP:13338"/>
        <dbReference type="Rhea" id="RHEA-COMP:13339"/>
        <dbReference type="Rhea" id="RHEA-COMP:13340"/>
        <dbReference type="ChEBI" id="CHEBI:15378"/>
        <dbReference type="ChEBI" id="CHEBI:29950"/>
        <dbReference type="ChEBI" id="CHEBI:30616"/>
        <dbReference type="ChEBI" id="CHEBI:33019"/>
        <dbReference type="ChEBI" id="CHEBI:33737"/>
        <dbReference type="ChEBI" id="CHEBI:33738"/>
        <dbReference type="ChEBI" id="CHEBI:61963"/>
        <dbReference type="ChEBI" id="CHEBI:65315"/>
        <dbReference type="ChEBI" id="CHEBI:136798"/>
        <dbReference type="ChEBI" id="CHEBI:456215"/>
        <dbReference type="EC" id="2.8.1.4"/>
    </reaction>
</comment>
<comment type="catalytic activity">
    <reaction evidence="1">
        <text>[ThiS sulfur-carrier protein]-C-terminal Gly-Gly-AMP + S-sulfanyl-L-cysteinyl-[cysteine desulfurase] + AH2 = [ThiS sulfur-carrier protein]-C-terminal-Gly-aminoethanethioate + L-cysteinyl-[cysteine desulfurase] + A + AMP + 2 H(+)</text>
        <dbReference type="Rhea" id="RHEA:43340"/>
        <dbReference type="Rhea" id="RHEA-COMP:12157"/>
        <dbReference type="Rhea" id="RHEA-COMP:12158"/>
        <dbReference type="Rhea" id="RHEA-COMP:12910"/>
        <dbReference type="Rhea" id="RHEA-COMP:19908"/>
        <dbReference type="ChEBI" id="CHEBI:13193"/>
        <dbReference type="ChEBI" id="CHEBI:15378"/>
        <dbReference type="ChEBI" id="CHEBI:17499"/>
        <dbReference type="ChEBI" id="CHEBI:29950"/>
        <dbReference type="ChEBI" id="CHEBI:61963"/>
        <dbReference type="ChEBI" id="CHEBI:90618"/>
        <dbReference type="ChEBI" id="CHEBI:232372"/>
        <dbReference type="ChEBI" id="CHEBI:456215"/>
    </reaction>
</comment>
<comment type="pathway">
    <text evidence="1">Cofactor biosynthesis; thiamine diphosphate biosynthesis.</text>
</comment>
<comment type="subcellular location">
    <subcellularLocation>
        <location evidence="1">Cytoplasm</location>
    </subcellularLocation>
</comment>
<comment type="similarity">
    <text evidence="1">Belongs to the ThiI family.</text>
</comment>
<protein>
    <recommendedName>
        <fullName evidence="1">Probable tRNA sulfurtransferase</fullName>
        <ecNumber evidence="1">2.8.1.4</ecNumber>
    </recommendedName>
    <alternativeName>
        <fullName evidence="1">Sulfur carrier protein ThiS sulfurtransferase</fullName>
    </alternativeName>
    <alternativeName>
        <fullName evidence="1">Thiamine biosynthesis protein ThiI</fullName>
    </alternativeName>
    <alternativeName>
        <fullName evidence="1">tRNA 4-thiouridine synthase</fullName>
    </alternativeName>
</protein>
<organism>
    <name type="scientific">Clostridium perfringens (strain ATCC 13124 / DSM 756 / JCM 1290 / NCIMB 6125 / NCTC 8237 / Type A)</name>
    <dbReference type="NCBI Taxonomy" id="195103"/>
    <lineage>
        <taxon>Bacteria</taxon>
        <taxon>Bacillati</taxon>
        <taxon>Bacillota</taxon>
        <taxon>Clostridia</taxon>
        <taxon>Eubacteriales</taxon>
        <taxon>Clostridiaceae</taxon>
        <taxon>Clostridium</taxon>
    </lineage>
</organism>